<protein>
    <recommendedName>
        <fullName evidence="2">Elongation factor Tu 2</fullName>
        <shortName evidence="2">EF-Tu 2</shortName>
        <ecNumber evidence="2">3.6.5.3</ecNumber>
    </recommendedName>
</protein>
<comment type="function">
    <text evidence="2">GTP hydrolase that promotes the GTP-dependent binding of aminoacyl-tRNA to the A-site of ribosomes during protein biosynthesis.</text>
</comment>
<comment type="catalytic activity">
    <reaction evidence="2">
        <text>GTP + H2O = GDP + phosphate + H(+)</text>
        <dbReference type="Rhea" id="RHEA:19669"/>
        <dbReference type="ChEBI" id="CHEBI:15377"/>
        <dbReference type="ChEBI" id="CHEBI:15378"/>
        <dbReference type="ChEBI" id="CHEBI:37565"/>
        <dbReference type="ChEBI" id="CHEBI:43474"/>
        <dbReference type="ChEBI" id="CHEBI:58189"/>
        <dbReference type="EC" id="3.6.5.3"/>
    </reaction>
    <physiologicalReaction direction="left-to-right" evidence="2">
        <dbReference type="Rhea" id="RHEA:19670"/>
    </physiologicalReaction>
</comment>
<comment type="subunit">
    <text evidence="2">Monomer.</text>
</comment>
<comment type="subcellular location">
    <subcellularLocation>
        <location evidence="2">Cytoplasm</location>
    </subcellularLocation>
</comment>
<comment type="similarity">
    <text evidence="2">Belongs to the TRAFAC class translation factor GTPase superfamily. Classic translation factor GTPase family. EF-Tu/EF-1A subfamily.</text>
</comment>
<reference key="1">
    <citation type="journal article" date="2005" name="Genome Res.">
        <title>Comparative and functional genomic analyses of the pathogenicity of phytopathogen Xanthomonas campestris pv. campestris.</title>
        <authorList>
            <person name="Qian W."/>
            <person name="Jia Y."/>
            <person name="Ren S.-X."/>
            <person name="He Y.-Q."/>
            <person name="Feng J.-X."/>
            <person name="Lu L.-F."/>
            <person name="Sun Q."/>
            <person name="Ying G."/>
            <person name="Tang D.-J."/>
            <person name="Tang H."/>
            <person name="Wu W."/>
            <person name="Hao P."/>
            <person name="Wang L."/>
            <person name="Jiang B.-L."/>
            <person name="Zeng S."/>
            <person name="Gu W.-Y."/>
            <person name="Lu G."/>
            <person name="Rong L."/>
            <person name="Tian Y."/>
            <person name="Yao Z."/>
            <person name="Fu G."/>
            <person name="Chen B."/>
            <person name="Fang R."/>
            <person name="Qiang B."/>
            <person name="Chen Z."/>
            <person name="Zhao G.-P."/>
            <person name="Tang J.-L."/>
            <person name="He C."/>
        </authorList>
    </citation>
    <scope>NUCLEOTIDE SEQUENCE [LARGE SCALE GENOMIC DNA]</scope>
    <source>
        <strain>8004</strain>
    </source>
</reference>
<sequence length="396" mass="43185">MARAKFLREKLHVNVGTIGHVDHGKTTLTAALTKIGAERFGGEFKAYDAIDAAPEEKARGITISTAHVEYESAVRHYAHVDCPGHADYVKNMITGAAQMDGAILVCSAADGPMPQTREHILLSRQVGVPHIVVFLNKADMVDDAELLELVEMEVRELLSKYDFPGDDTPIIHGSARLALEGDQSDIGVPAILKLVEALDTFIPDPTRDVDRPFLMPVEDVFSISGRGTVVTGRIERGIIKVGDEIEIVGIRDTQKTTVTGVEMFRKLLDQGQAGDNAGLLLRGTKRDDVERGQVLCKPGSIKPHTEFEAEVYVLSKDEGGRHTPFFKGYRPQFYFRTTDITGACQLPEGVEMVMPGDNVKMVVTLINPVAMDEGLRFAIREGGRTVGAGVVAKIIK</sequence>
<gene>
    <name evidence="2" type="primary">tuf2</name>
    <name type="ordered locus">XC_3354</name>
</gene>
<keyword id="KW-0963">Cytoplasm</keyword>
<keyword id="KW-0251">Elongation factor</keyword>
<keyword id="KW-0342">GTP-binding</keyword>
<keyword id="KW-0378">Hydrolase</keyword>
<keyword id="KW-0460">Magnesium</keyword>
<keyword id="KW-0479">Metal-binding</keyword>
<keyword id="KW-0547">Nucleotide-binding</keyword>
<keyword id="KW-0648">Protein biosynthesis</keyword>
<proteinExistence type="inferred from homology"/>
<name>EFTU2_XANC8</name>
<accession>Q4URC5</accession>
<feature type="chain" id="PRO_0000337576" description="Elongation factor Tu 2">
    <location>
        <begin position="1"/>
        <end position="396"/>
    </location>
</feature>
<feature type="domain" description="tr-type G">
    <location>
        <begin position="10"/>
        <end position="206"/>
    </location>
</feature>
<feature type="region of interest" description="G1" evidence="1">
    <location>
        <begin position="19"/>
        <end position="26"/>
    </location>
</feature>
<feature type="region of interest" description="G2" evidence="1">
    <location>
        <begin position="60"/>
        <end position="64"/>
    </location>
</feature>
<feature type="region of interest" description="G3" evidence="1">
    <location>
        <begin position="81"/>
        <end position="84"/>
    </location>
</feature>
<feature type="region of interest" description="G4" evidence="1">
    <location>
        <begin position="136"/>
        <end position="139"/>
    </location>
</feature>
<feature type="region of interest" description="G5" evidence="1">
    <location>
        <begin position="174"/>
        <end position="176"/>
    </location>
</feature>
<feature type="binding site" evidence="2">
    <location>
        <begin position="19"/>
        <end position="26"/>
    </location>
    <ligand>
        <name>GTP</name>
        <dbReference type="ChEBI" id="CHEBI:37565"/>
    </ligand>
</feature>
<feature type="binding site" evidence="2">
    <location>
        <position position="26"/>
    </location>
    <ligand>
        <name>Mg(2+)</name>
        <dbReference type="ChEBI" id="CHEBI:18420"/>
    </ligand>
</feature>
<feature type="binding site" evidence="2">
    <location>
        <begin position="81"/>
        <end position="85"/>
    </location>
    <ligand>
        <name>GTP</name>
        <dbReference type="ChEBI" id="CHEBI:37565"/>
    </ligand>
</feature>
<feature type="binding site" evidence="2">
    <location>
        <begin position="136"/>
        <end position="139"/>
    </location>
    <ligand>
        <name>GTP</name>
        <dbReference type="ChEBI" id="CHEBI:37565"/>
    </ligand>
</feature>
<organism>
    <name type="scientific">Xanthomonas campestris pv. campestris (strain 8004)</name>
    <dbReference type="NCBI Taxonomy" id="314565"/>
    <lineage>
        <taxon>Bacteria</taxon>
        <taxon>Pseudomonadati</taxon>
        <taxon>Pseudomonadota</taxon>
        <taxon>Gammaproteobacteria</taxon>
        <taxon>Lysobacterales</taxon>
        <taxon>Lysobacteraceae</taxon>
        <taxon>Xanthomonas</taxon>
    </lineage>
</organism>
<evidence type="ECO:0000250" key="1"/>
<evidence type="ECO:0000255" key="2">
    <source>
        <dbReference type="HAMAP-Rule" id="MF_00118"/>
    </source>
</evidence>
<dbReference type="EC" id="3.6.5.3" evidence="2"/>
<dbReference type="EMBL" id="CP000050">
    <property type="protein sequence ID" value="AAY50398.1"/>
    <property type="molecule type" value="Genomic_DNA"/>
</dbReference>
<dbReference type="SMR" id="Q4URC5"/>
<dbReference type="KEGG" id="xcb:XC_3354"/>
<dbReference type="HOGENOM" id="CLU_007265_0_0_6"/>
<dbReference type="Proteomes" id="UP000000420">
    <property type="component" value="Chromosome"/>
</dbReference>
<dbReference type="GO" id="GO:0005829">
    <property type="term" value="C:cytosol"/>
    <property type="evidence" value="ECO:0007669"/>
    <property type="project" value="TreeGrafter"/>
</dbReference>
<dbReference type="GO" id="GO:0005525">
    <property type="term" value="F:GTP binding"/>
    <property type="evidence" value="ECO:0007669"/>
    <property type="project" value="UniProtKB-UniRule"/>
</dbReference>
<dbReference type="GO" id="GO:0003924">
    <property type="term" value="F:GTPase activity"/>
    <property type="evidence" value="ECO:0007669"/>
    <property type="project" value="InterPro"/>
</dbReference>
<dbReference type="GO" id="GO:0097216">
    <property type="term" value="F:guanosine tetraphosphate binding"/>
    <property type="evidence" value="ECO:0007669"/>
    <property type="project" value="UniProtKB-ARBA"/>
</dbReference>
<dbReference type="GO" id="GO:0003746">
    <property type="term" value="F:translation elongation factor activity"/>
    <property type="evidence" value="ECO:0007669"/>
    <property type="project" value="UniProtKB-UniRule"/>
</dbReference>
<dbReference type="CDD" id="cd01884">
    <property type="entry name" value="EF_Tu"/>
    <property type="match status" value="1"/>
</dbReference>
<dbReference type="CDD" id="cd03697">
    <property type="entry name" value="EFTU_II"/>
    <property type="match status" value="1"/>
</dbReference>
<dbReference type="CDD" id="cd03707">
    <property type="entry name" value="EFTU_III"/>
    <property type="match status" value="1"/>
</dbReference>
<dbReference type="FunFam" id="2.40.30.10:FF:000001">
    <property type="entry name" value="Elongation factor Tu"/>
    <property type="match status" value="1"/>
</dbReference>
<dbReference type="FunFam" id="3.40.50.300:FF:000003">
    <property type="entry name" value="Elongation factor Tu"/>
    <property type="match status" value="1"/>
</dbReference>
<dbReference type="Gene3D" id="3.40.50.300">
    <property type="entry name" value="P-loop containing nucleotide triphosphate hydrolases"/>
    <property type="match status" value="1"/>
</dbReference>
<dbReference type="Gene3D" id="2.40.30.10">
    <property type="entry name" value="Translation factors"/>
    <property type="match status" value="2"/>
</dbReference>
<dbReference type="HAMAP" id="MF_00118_B">
    <property type="entry name" value="EF_Tu_B"/>
    <property type="match status" value="1"/>
</dbReference>
<dbReference type="InterPro" id="IPR041709">
    <property type="entry name" value="EF-Tu_GTP-bd"/>
</dbReference>
<dbReference type="InterPro" id="IPR050055">
    <property type="entry name" value="EF-Tu_GTPase"/>
</dbReference>
<dbReference type="InterPro" id="IPR004161">
    <property type="entry name" value="EFTu-like_2"/>
</dbReference>
<dbReference type="InterPro" id="IPR033720">
    <property type="entry name" value="EFTU_2"/>
</dbReference>
<dbReference type="InterPro" id="IPR031157">
    <property type="entry name" value="G_TR_CS"/>
</dbReference>
<dbReference type="InterPro" id="IPR027417">
    <property type="entry name" value="P-loop_NTPase"/>
</dbReference>
<dbReference type="InterPro" id="IPR005225">
    <property type="entry name" value="Small_GTP-bd"/>
</dbReference>
<dbReference type="InterPro" id="IPR000795">
    <property type="entry name" value="T_Tr_GTP-bd_dom"/>
</dbReference>
<dbReference type="InterPro" id="IPR009000">
    <property type="entry name" value="Transl_B-barrel_sf"/>
</dbReference>
<dbReference type="InterPro" id="IPR009001">
    <property type="entry name" value="Transl_elong_EF1A/Init_IF2_C"/>
</dbReference>
<dbReference type="InterPro" id="IPR004541">
    <property type="entry name" value="Transl_elong_EFTu/EF1A_bac/org"/>
</dbReference>
<dbReference type="InterPro" id="IPR004160">
    <property type="entry name" value="Transl_elong_EFTu/EF1A_C"/>
</dbReference>
<dbReference type="NCBIfam" id="TIGR00485">
    <property type="entry name" value="EF-Tu"/>
    <property type="match status" value="1"/>
</dbReference>
<dbReference type="NCBIfam" id="NF000766">
    <property type="entry name" value="PRK00049.1"/>
    <property type="match status" value="1"/>
</dbReference>
<dbReference type="NCBIfam" id="NF009372">
    <property type="entry name" value="PRK12735.1"/>
    <property type="match status" value="1"/>
</dbReference>
<dbReference type="NCBIfam" id="NF009373">
    <property type="entry name" value="PRK12736.1"/>
    <property type="match status" value="1"/>
</dbReference>
<dbReference type="NCBIfam" id="TIGR00231">
    <property type="entry name" value="small_GTP"/>
    <property type="match status" value="1"/>
</dbReference>
<dbReference type="PANTHER" id="PTHR43721:SF22">
    <property type="entry name" value="ELONGATION FACTOR TU, MITOCHONDRIAL"/>
    <property type="match status" value="1"/>
</dbReference>
<dbReference type="PANTHER" id="PTHR43721">
    <property type="entry name" value="ELONGATION FACTOR TU-RELATED"/>
    <property type="match status" value="1"/>
</dbReference>
<dbReference type="Pfam" id="PF00009">
    <property type="entry name" value="GTP_EFTU"/>
    <property type="match status" value="1"/>
</dbReference>
<dbReference type="Pfam" id="PF03144">
    <property type="entry name" value="GTP_EFTU_D2"/>
    <property type="match status" value="1"/>
</dbReference>
<dbReference type="Pfam" id="PF03143">
    <property type="entry name" value="GTP_EFTU_D3"/>
    <property type="match status" value="1"/>
</dbReference>
<dbReference type="PRINTS" id="PR00315">
    <property type="entry name" value="ELONGATNFCT"/>
</dbReference>
<dbReference type="SUPFAM" id="SSF50465">
    <property type="entry name" value="EF-Tu/eEF-1alpha/eIF2-gamma C-terminal domain"/>
    <property type="match status" value="1"/>
</dbReference>
<dbReference type="SUPFAM" id="SSF52540">
    <property type="entry name" value="P-loop containing nucleoside triphosphate hydrolases"/>
    <property type="match status" value="1"/>
</dbReference>
<dbReference type="SUPFAM" id="SSF50447">
    <property type="entry name" value="Translation proteins"/>
    <property type="match status" value="1"/>
</dbReference>
<dbReference type="PROSITE" id="PS00301">
    <property type="entry name" value="G_TR_1"/>
    <property type="match status" value="1"/>
</dbReference>
<dbReference type="PROSITE" id="PS51722">
    <property type="entry name" value="G_TR_2"/>
    <property type="match status" value="1"/>
</dbReference>